<feature type="initiator methionine" description="Removed" evidence="1">
    <location>
        <position position="1"/>
    </location>
</feature>
<feature type="chain" id="PRO_0000168475" description="L-lactate dehydrogenase B-A chain">
    <location>
        <begin position="2"/>
        <end position="334"/>
    </location>
</feature>
<feature type="active site" description="Proton acceptor" evidence="1">
    <location>
        <position position="194"/>
    </location>
</feature>
<feature type="binding site" evidence="1">
    <location>
        <begin position="30"/>
        <end position="58"/>
    </location>
    <ligand>
        <name>NAD(+)</name>
        <dbReference type="ChEBI" id="CHEBI:57540"/>
    </ligand>
</feature>
<feature type="binding site" evidence="1">
    <location>
        <position position="100"/>
    </location>
    <ligand>
        <name>NAD(+)</name>
        <dbReference type="ChEBI" id="CHEBI:57540"/>
    </ligand>
</feature>
<feature type="binding site" evidence="1">
    <location>
        <position position="107"/>
    </location>
    <ligand>
        <name>substrate</name>
    </ligand>
</feature>
<feature type="binding site" evidence="1">
    <location>
        <position position="139"/>
    </location>
    <ligand>
        <name>NAD(+)</name>
        <dbReference type="ChEBI" id="CHEBI:57540"/>
    </ligand>
</feature>
<feature type="binding site" evidence="1">
    <location>
        <position position="139"/>
    </location>
    <ligand>
        <name>substrate</name>
    </ligand>
</feature>
<feature type="binding site" evidence="1">
    <location>
        <position position="170"/>
    </location>
    <ligand>
        <name>substrate</name>
    </ligand>
</feature>
<feature type="binding site" evidence="1">
    <location>
        <position position="249"/>
    </location>
    <ligand>
        <name>substrate</name>
    </ligand>
</feature>
<feature type="sequence conflict" description="In Ref. 1; AAF02213." evidence="2" ref="1">
    <original>T</original>
    <variation>P</variation>
    <location>
        <position position="164"/>
    </location>
</feature>
<name>LDHBA_DANRE</name>
<sequence length="334" mass="36247">MASVMQKLITPLASGPAEPPRNKVTIVGVGQVGMACAVSVLLRELADELALVDVVEDRLKGEMLDLQHGSLFLKTPKIVADKDYSVTANSRIVVVTAGVRQQEGESRLNLVQRNVNIFKHIIPQIVKYSPDCILVVVSNPVDVLTYVTWKLSGLPKHRVIGSGTNLDSARFRYIMAEKLGIHASSFNGYILGEHGDTSVPVWSGANVAGVSLQKLNPDIGTDKDAENWKEAHKMVVDSAYEVIKLKGYTNWAIGLSVADLTETLVKNLNRVHPVSTMVKGMYGINEEVYLSLPCVLNSSGVGSVINMTLTDGEIGQLKSSADTLWGIQKDLKDL</sequence>
<proteinExistence type="evidence at transcript level"/>
<reference key="1">
    <citation type="submission" date="1998-05" db="EMBL/GenBank/DDBJ databases">
        <title>Molecular evolution of vertebrate lactate dehydrogenase isozymes by gene duplication.</title>
        <authorList>
            <person name="Tsoi S.C.-M."/>
            <person name="Li J.Y."/>
            <person name="Mannen H."/>
            <person name="Li S.S.-L."/>
        </authorList>
    </citation>
    <scope>NUCLEOTIDE SEQUENCE [MRNA]</scope>
</reference>
<reference key="2">
    <citation type="journal article" date="2013" name="Nature">
        <title>The zebrafish reference genome sequence and its relationship to the human genome.</title>
        <authorList>
            <person name="Howe K."/>
            <person name="Clark M.D."/>
            <person name="Torroja C.F."/>
            <person name="Torrance J."/>
            <person name="Berthelot C."/>
            <person name="Muffato M."/>
            <person name="Collins J.E."/>
            <person name="Humphray S."/>
            <person name="McLaren K."/>
            <person name="Matthews L."/>
            <person name="McLaren S."/>
            <person name="Sealy I."/>
            <person name="Caccamo M."/>
            <person name="Churcher C."/>
            <person name="Scott C."/>
            <person name="Barrett J.C."/>
            <person name="Koch R."/>
            <person name="Rauch G.J."/>
            <person name="White S."/>
            <person name="Chow W."/>
            <person name="Kilian B."/>
            <person name="Quintais L.T."/>
            <person name="Guerra-Assuncao J.A."/>
            <person name="Zhou Y."/>
            <person name="Gu Y."/>
            <person name="Yen J."/>
            <person name="Vogel J.H."/>
            <person name="Eyre T."/>
            <person name="Redmond S."/>
            <person name="Banerjee R."/>
            <person name="Chi J."/>
            <person name="Fu B."/>
            <person name="Langley E."/>
            <person name="Maguire S.F."/>
            <person name="Laird G.K."/>
            <person name="Lloyd D."/>
            <person name="Kenyon E."/>
            <person name="Donaldson S."/>
            <person name="Sehra H."/>
            <person name="Almeida-King J."/>
            <person name="Loveland J."/>
            <person name="Trevanion S."/>
            <person name="Jones M."/>
            <person name="Quail M."/>
            <person name="Willey D."/>
            <person name="Hunt A."/>
            <person name="Burton J."/>
            <person name="Sims S."/>
            <person name="McLay K."/>
            <person name="Plumb B."/>
            <person name="Davis J."/>
            <person name="Clee C."/>
            <person name="Oliver K."/>
            <person name="Clark R."/>
            <person name="Riddle C."/>
            <person name="Elliot D."/>
            <person name="Threadgold G."/>
            <person name="Harden G."/>
            <person name="Ware D."/>
            <person name="Begum S."/>
            <person name="Mortimore B."/>
            <person name="Kerry G."/>
            <person name="Heath P."/>
            <person name="Phillimore B."/>
            <person name="Tracey A."/>
            <person name="Corby N."/>
            <person name="Dunn M."/>
            <person name="Johnson C."/>
            <person name="Wood J."/>
            <person name="Clark S."/>
            <person name="Pelan S."/>
            <person name="Griffiths G."/>
            <person name="Smith M."/>
            <person name="Glithero R."/>
            <person name="Howden P."/>
            <person name="Barker N."/>
            <person name="Lloyd C."/>
            <person name="Stevens C."/>
            <person name="Harley J."/>
            <person name="Holt K."/>
            <person name="Panagiotidis G."/>
            <person name="Lovell J."/>
            <person name="Beasley H."/>
            <person name="Henderson C."/>
            <person name="Gordon D."/>
            <person name="Auger K."/>
            <person name="Wright D."/>
            <person name="Collins J."/>
            <person name="Raisen C."/>
            <person name="Dyer L."/>
            <person name="Leung K."/>
            <person name="Robertson L."/>
            <person name="Ambridge K."/>
            <person name="Leongamornlert D."/>
            <person name="McGuire S."/>
            <person name="Gilderthorp R."/>
            <person name="Griffiths C."/>
            <person name="Manthravadi D."/>
            <person name="Nichol S."/>
            <person name="Barker G."/>
            <person name="Whitehead S."/>
            <person name="Kay M."/>
            <person name="Brown J."/>
            <person name="Murnane C."/>
            <person name="Gray E."/>
            <person name="Humphries M."/>
            <person name="Sycamore N."/>
            <person name="Barker D."/>
            <person name="Saunders D."/>
            <person name="Wallis J."/>
            <person name="Babbage A."/>
            <person name="Hammond S."/>
            <person name="Mashreghi-Mohammadi M."/>
            <person name="Barr L."/>
            <person name="Martin S."/>
            <person name="Wray P."/>
            <person name="Ellington A."/>
            <person name="Matthews N."/>
            <person name="Ellwood M."/>
            <person name="Woodmansey R."/>
            <person name="Clark G."/>
            <person name="Cooper J."/>
            <person name="Tromans A."/>
            <person name="Grafham D."/>
            <person name="Skuce C."/>
            <person name="Pandian R."/>
            <person name="Andrews R."/>
            <person name="Harrison E."/>
            <person name="Kimberley A."/>
            <person name="Garnett J."/>
            <person name="Fosker N."/>
            <person name="Hall R."/>
            <person name="Garner P."/>
            <person name="Kelly D."/>
            <person name="Bird C."/>
            <person name="Palmer S."/>
            <person name="Gehring I."/>
            <person name="Berger A."/>
            <person name="Dooley C.M."/>
            <person name="Ersan-Urun Z."/>
            <person name="Eser C."/>
            <person name="Geiger H."/>
            <person name="Geisler M."/>
            <person name="Karotki L."/>
            <person name="Kirn A."/>
            <person name="Konantz J."/>
            <person name="Konantz M."/>
            <person name="Oberlander M."/>
            <person name="Rudolph-Geiger S."/>
            <person name="Teucke M."/>
            <person name="Lanz C."/>
            <person name="Raddatz G."/>
            <person name="Osoegawa K."/>
            <person name="Zhu B."/>
            <person name="Rapp A."/>
            <person name="Widaa S."/>
            <person name="Langford C."/>
            <person name="Yang F."/>
            <person name="Schuster S.C."/>
            <person name="Carter N.P."/>
            <person name="Harrow J."/>
            <person name="Ning Z."/>
            <person name="Herrero J."/>
            <person name="Searle S.M."/>
            <person name="Enright A."/>
            <person name="Geisler R."/>
            <person name="Plasterk R.H."/>
            <person name="Lee C."/>
            <person name="Westerfield M."/>
            <person name="de Jong P.J."/>
            <person name="Zon L.I."/>
            <person name="Postlethwait J.H."/>
            <person name="Nusslein-Volhard C."/>
            <person name="Hubbard T.J."/>
            <person name="Roest Crollius H."/>
            <person name="Rogers J."/>
            <person name="Stemple D.L."/>
        </authorList>
    </citation>
    <scope>NUCLEOTIDE SEQUENCE [LARGE SCALE GENOMIC DNA]</scope>
    <source>
        <strain>Tuebingen</strain>
    </source>
</reference>
<reference key="3">
    <citation type="submission" date="2004-04" db="EMBL/GenBank/DDBJ databases">
        <authorList>
            <consortium name="NIH - Zebrafish Gene Collection (ZGC) project"/>
        </authorList>
    </citation>
    <scope>NUCLEOTIDE SEQUENCE [LARGE SCALE MRNA]</scope>
    <source>
        <strain>AB</strain>
        <tissue>Kidney</tissue>
    </source>
</reference>
<reference key="4">
    <citation type="journal article" date="2002" name="J. Mol. Evol.">
        <title>Phylogenetic analysis of vertebrate lactate dehydrogenase (LDH) multigene families.</title>
        <authorList>
            <person name="Li Y.J."/>
            <person name="Tsoi S.C."/>
            <person name="Mannen H."/>
            <person name="Shoei-lung Li S."/>
        </authorList>
    </citation>
    <scope>PHYLOGENETIC STUDY</scope>
</reference>
<accession>Q9PVK4</accession>
<accession>Q803U5</accession>
<keyword id="KW-0963">Cytoplasm</keyword>
<keyword id="KW-0520">NAD</keyword>
<keyword id="KW-0560">Oxidoreductase</keyword>
<keyword id="KW-1185">Reference proteome</keyword>
<dbReference type="EC" id="1.1.1.27"/>
<dbReference type="EMBL" id="AF067202">
    <property type="protein sequence ID" value="AAF02213.1"/>
    <property type="molecule type" value="mRNA"/>
</dbReference>
<dbReference type="EMBL" id="BX649476">
    <property type="protein sequence ID" value="CAI20632.1"/>
    <property type="molecule type" value="Genomic_DNA"/>
</dbReference>
<dbReference type="EMBL" id="BC044190">
    <property type="protein sequence ID" value="AAH44190.1"/>
    <property type="molecule type" value="mRNA"/>
</dbReference>
<dbReference type="EMBL" id="BC068981">
    <property type="protein sequence ID" value="AAH68981.1"/>
    <property type="molecule type" value="mRNA"/>
</dbReference>
<dbReference type="RefSeq" id="NP_571322.1">
    <property type="nucleotide sequence ID" value="NM_131247.1"/>
</dbReference>
<dbReference type="SMR" id="Q9PVK4"/>
<dbReference type="FunCoup" id="Q9PVK4">
    <property type="interactions" value="1121"/>
</dbReference>
<dbReference type="IntAct" id="Q9PVK4">
    <property type="interactions" value="1"/>
</dbReference>
<dbReference type="MINT" id="Q9PVK4"/>
<dbReference type="STRING" id="7955.ENSDARP00000013329"/>
<dbReference type="PaxDb" id="7955-ENSDARP00000013329"/>
<dbReference type="Ensembl" id="ENSDART00000010777">
    <property type="protein sequence ID" value="ENSDARP00000013329"/>
    <property type="gene ID" value="ENSDARG00000019644"/>
</dbReference>
<dbReference type="Ensembl" id="ENSDART00000179867">
    <property type="protein sequence ID" value="ENSDARP00000156680"/>
    <property type="gene ID" value="ENSDARG00000019644"/>
</dbReference>
<dbReference type="GeneID" id="30497"/>
<dbReference type="KEGG" id="dre:30497"/>
<dbReference type="AGR" id="ZFIN:ZDB-GENE-991026-6"/>
<dbReference type="CTD" id="30497"/>
<dbReference type="ZFIN" id="ZDB-GENE-991026-6">
    <property type="gene designation" value="ldhba"/>
</dbReference>
<dbReference type="eggNOG" id="KOG1495">
    <property type="taxonomic scope" value="Eukaryota"/>
</dbReference>
<dbReference type="HOGENOM" id="CLU_045401_0_2_1"/>
<dbReference type="InParanoid" id="Q9PVK4"/>
<dbReference type="OMA" id="AHVREKG"/>
<dbReference type="OrthoDB" id="5405561at2759"/>
<dbReference type="PhylomeDB" id="Q9PVK4"/>
<dbReference type="TreeFam" id="TF314963"/>
<dbReference type="Reactome" id="R-DRE-70268">
    <property type="pathway name" value="Pyruvate metabolism"/>
</dbReference>
<dbReference type="UniPathway" id="UPA00554">
    <property type="reaction ID" value="UER00611"/>
</dbReference>
<dbReference type="PRO" id="PR:Q9PVK4"/>
<dbReference type="Proteomes" id="UP000000437">
    <property type="component" value="Chromosome 4"/>
</dbReference>
<dbReference type="Bgee" id="ENSDARG00000019644">
    <property type="expression patterns" value="Expressed in heart and 48 other cell types or tissues"/>
</dbReference>
<dbReference type="GO" id="GO:0005739">
    <property type="term" value="C:mitochondrion"/>
    <property type="evidence" value="ECO:0000318"/>
    <property type="project" value="GO_Central"/>
</dbReference>
<dbReference type="GO" id="GO:0004459">
    <property type="term" value="F:L-lactate dehydrogenase activity"/>
    <property type="evidence" value="ECO:0000318"/>
    <property type="project" value="GO_Central"/>
</dbReference>
<dbReference type="GO" id="GO:0006089">
    <property type="term" value="P:lactate metabolic process"/>
    <property type="evidence" value="ECO:0000318"/>
    <property type="project" value="GO_Central"/>
</dbReference>
<dbReference type="GO" id="GO:0006090">
    <property type="term" value="P:pyruvate metabolic process"/>
    <property type="evidence" value="ECO:0000318"/>
    <property type="project" value="GO_Central"/>
</dbReference>
<dbReference type="CDD" id="cd05293">
    <property type="entry name" value="LDH_1"/>
    <property type="match status" value="1"/>
</dbReference>
<dbReference type="FunFam" id="3.40.50.720:FF:000029">
    <property type="entry name" value="L-lactate dehydrogenase A chain"/>
    <property type="match status" value="1"/>
</dbReference>
<dbReference type="FunFam" id="3.90.110.10:FF:000003">
    <property type="entry name" value="L-lactate dehydrogenase A chain"/>
    <property type="match status" value="1"/>
</dbReference>
<dbReference type="Gene3D" id="3.90.110.10">
    <property type="entry name" value="Lactate dehydrogenase/glycoside hydrolase, family 4, C-terminal"/>
    <property type="match status" value="1"/>
</dbReference>
<dbReference type="Gene3D" id="3.40.50.720">
    <property type="entry name" value="NAD(P)-binding Rossmann-like Domain"/>
    <property type="match status" value="1"/>
</dbReference>
<dbReference type="HAMAP" id="MF_00488">
    <property type="entry name" value="Lactate_dehydrog"/>
    <property type="match status" value="1"/>
</dbReference>
<dbReference type="InterPro" id="IPR001557">
    <property type="entry name" value="L-lactate/malate_DH"/>
</dbReference>
<dbReference type="InterPro" id="IPR011304">
    <property type="entry name" value="L-lactate_DH"/>
</dbReference>
<dbReference type="InterPro" id="IPR018177">
    <property type="entry name" value="L-lactate_DH_AS"/>
</dbReference>
<dbReference type="InterPro" id="IPR022383">
    <property type="entry name" value="Lactate/malate_DH_C"/>
</dbReference>
<dbReference type="InterPro" id="IPR001236">
    <property type="entry name" value="Lactate/malate_DH_N"/>
</dbReference>
<dbReference type="InterPro" id="IPR015955">
    <property type="entry name" value="Lactate_DH/Glyco_Ohase_4_C"/>
</dbReference>
<dbReference type="InterPro" id="IPR036291">
    <property type="entry name" value="NAD(P)-bd_dom_sf"/>
</dbReference>
<dbReference type="NCBIfam" id="TIGR01771">
    <property type="entry name" value="L-LDH-NAD"/>
    <property type="match status" value="1"/>
</dbReference>
<dbReference type="NCBIfam" id="NF000824">
    <property type="entry name" value="PRK00066.1"/>
    <property type="match status" value="1"/>
</dbReference>
<dbReference type="PANTHER" id="PTHR43128">
    <property type="entry name" value="L-2-HYDROXYCARBOXYLATE DEHYDROGENASE (NAD(P)(+))"/>
    <property type="match status" value="1"/>
</dbReference>
<dbReference type="PANTHER" id="PTHR43128:SF2">
    <property type="entry name" value="L-LACTATE DEHYDROGENASE B CHAIN"/>
    <property type="match status" value="1"/>
</dbReference>
<dbReference type="Pfam" id="PF02866">
    <property type="entry name" value="Ldh_1_C"/>
    <property type="match status" value="1"/>
</dbReference>
<dbReference type="Pfam" id="PF00056">
    <property type="entry name" value="Ldh_1_N"/>
    <property type="match status" value="1"/>
</dbReference>
<dbReference type="PIRSF" id="PIRSF000102">
    <property type="entry name" value="Lac_mal_DH"/>
    <property type="match status" value="1"/>
</dbReference>
<dbReference type="PRINTS" id="PR00086">
    <property type="entry name" value="LLDHDRGNASE"/>
</dbReference>
<dbReference type="SUPFAM" id="SSF56327">
    <property type="entry name" value="LDH C-terminal domain-like"/>
    <property type="match status" value="1"/>
</dbReference>
<dbReference type="SUPFAM" id="SSF51735">
    <property type="entry name" value="NAD(P)-binding Rossmann-fold domains"/>
    <property type="match status" value="1"/>
</dbReference>
<dbReference type="PROSITE" id="PS00064">
    <property type="entry name" value="L_LDH"/>
    <property type="match status" value="1"/>
</dbReference>
<protein>
    <recommendedName>
        <fullName>L-lactate dehydrogenase B-A chain</fullName>
        <shortName>LDH-B-A</shortName>
        <ecNumber>1.1.1.27</ecNumber>
    </recommendedName>
</protein>
<evidence type="ECO:0000250" key="1"/>
<evidence type="ECO:0000305" key="2"/>
<organism>
    <name type="scientific">Danio rerio</name>
    <name type="common">Zebrafish</name>
    <name type="synonym">Brachydanio rerio</name>
    <dbReference type="NCBI Taxonomy" id="7955"/>
    <lineage>
        <taxon>Eukaryota</taxon>
        <taxon>Metazoa</taxon>
        <taxon>Chordata</taxon>
        <taxon>Craniata</taxon>
        <taxon>Vertebrata</taxon>
        <taxon>Euteleostomi</taxon>
        <taxon>Actinopterygii</taxon>
        <taxon>Neopterygii</taxon>
        <taxon>Teleostei</taxon>
        <taxon>Ostariophysi</taxon>
        <taxon>Cypriniformes</taxon>
        <taxon>Danionidae</taxon>
        <taxon>Danioninae</taxon>
        <taxon>Danio</taxon>
    </lineage>
</organism>
<gene>
    <name type="primary">ldhba</name>
    <name type="synonym">ldhb</name>
    <name type="ORF">si:dkey-13i19.5</name>
</gene>
<comment type="catalytic activity">
    <reaction>
        <text>(S)-lactate + NAD(+) = pyruvate + NADH + H(+)</text>
        <dbReference type="Rhea" id="RHEA:23444"/>
        <dbReference type="ChEBI" id="CHEBI:15361"/>
        <dbReference type="ChEBI" id="CHEBI:15378"/>
        <dbReference type="ChEBI" id="CHEBI:16651"/>
        <dbReference type="ChEBI" id="CHEBI:57540"/>
        <dbReference type="ChEBI" id="CHEBI:57945"/>
        <dbReference type="EC" id="1.1.1.27"/>
    </reaction>
</comment>
<comment type="pathway">
    <text>Fermentation; pyruvate fermentation to lactate; (S)-lactate from pyruvate: step 1/1.</text>
</comment>
<comment type="subunit">
    <text evidence="1">Homotetramer.</text>
</comment>
<comment type="subcellular location">
    <subcellularLocation>
        <location evidence="1">Cytoplasm</location>
    </subcellularLocation>
</comment>
<comment type="similarity">
    <text evidence="2">Belongs to the LDH/MDH superfamily. LDH family.</text>
</comment>